<accession>Q32P59</accession>
<reference key="1">
    <citation type="submission" date="2005-10" db="EMBL/GenBank/DDBJ databases">
        <authorList>
            <consortium name="NIH - Mammalian Gene Collection (MGC) project"/>
        </authorList>
    </citation>
    <scope>NUCLEOTIDE SEQUENCE [LARGE SCALE MRNA]</scope>
    <source>
        <strain>Crossbred X Angus</strain>
        <tissue>Liver</tissue>
    </source>
</reference>
<feature type="transit peptide" description="Mitochondrion" evidence="3">
    <location>
        <begin position="1"/>
        <end status="unknown"/>
    </location>
</feature>
<feature type="chain" id="PRO_0000247050" description="SRA stem-loop-interacting RNA-binding protein, mitochondrial">
    <location>
        <begin status="unknown"/>
        <end position="111"/>
    </location>
</feature>
<feature type="domain" description="RRM" evidence="4">
    <location>
        <begin position="19"/>
        <end position="96"/>
    </location>
</feature>
<feature type="region of interest" description="Disordered" evidence="5">
    <location>
        <begin position="92"/>
        <end position="111"/>
    </location>
</feature>
<feature type="modified residue" description="Phosphothreonine" evidence="2">
    <location>
        <position position="104"/>
    </location>
</feature>
<feature type="modified residue" description="Phosphoserine" evidence="2">
    <location>
        <position position="105"/>
    </location>
</feature>
<dbReference type="EMBL" id="BC108247">
    <property type="protein sequence ID" value="AAI08248.1"/>
    <property type="molecule type" value="mRNA"/>
</dbReference>
<dbReference type="RefSeq" id="NP_001032562.1">
    <property type="nucleotide sequence ID" value="NM_001037485.2"/>
</dbReference>
<dbReference type="SMR" id="Q32P59"/>
<dbReference type="FunCoup" id="Q32P59">
    <property type="interactions" value="1513"/>
</dbReference>
<dbReference type="STRING" id="9913.ENSBTAP00000040631"/>
<dbReference type="PaxDb" id="9913-ENSBTAP00000040631"/>
<dbReference type="GeneID" id="613614"/>
<dbReference type="KEGG" id="bta:613614"/>
<dbReference type="CTD" id="81892"/>
<dbReference type="eggNOG" id="KOG0118">
    <property type="taxonomic scope" value="Eukaryota"/>
</dbReference>
<dbReference type="HOGENOM" id="CLU_012062_28_10_1"/>
<dbReference type="InParanoid" id="Q32P59"/>
<dbReference type="OrthoDB" id="6159137at2759"/>
<dbReference type="TreeFam" id="TF319527"/>
<dbReference type="Proteomes" id="UP000009136">
    <property type="component" value="Unplaced"/>
</dbReference>
<dbReference type="GO" id="GO:0005739">
    <property type="term" value="C:mitochondrion"/>
    <property type="evidence" value="ECO:0007669"/>
    <property type="project" value="UniProtKB-SubCell"/>
</dbReference>
<dbReference type="GO" id="GO:0005634">
    <property type="term" value="C:nucleus"/>
    <property type="evidence" value="ECO:0007669"/>
    <property type="project" value="UniProtKB-SubCell"/>
</dbReference>
<dbReference type="GO" id="GO:0003723">
    <property type="term" value="F:RNA binding"/>
    <property type="evidence" value="ECO:0007669"/>
    <property type="project" value="UniProtKB-KW"/>
</dbReference>
<dbReference type="CDD" id="cd12242">
    <property type="entry name" value="RRM_SLIRP"/>
    <property type="match status" value="1"/>
</dbReference>
<dbReference type="FunFam" id="3.30.70.330:FF:000392">
    <property type="entry name" value="SRA stem-loop-interacting RNA-binding protein, mitochondrial"/>
    <property type="match status" value="1"/>
</dbReference>
<dbReference type="Gene3D" id="3.30.70.330">
    <property type="match status" value="1"/>
</dbReference>
<dbReference type="InterPro" id="IPR012677">
    <property type="entry name" value="Nucleotide-bd_a/b_plait_sf"/>
</dbReference>
<dbReference type="InterPro" id="IPR035979">
    <property type="entry name" value="RBD_domain_sf"/>
</dbReference>
<dbReference type="InterPro" id="IPR000504">
    <property type="entry name" value="RRM_dom"/>
</dbReference>
<dbReference type="InterPro" id="IPR034152">
    <property type="entry name" value="SLIRP_RRM"/>
</dbReference>
<dbReference type="PANTHER" id="PTHR11176">
    <property type="entry name" value="BOULE-RELATED"/>
    <property type="match status" value="1"/>
</dbReference>
<dbReference type="PANTHER" id="PTHR11176:SF61">
    <property type="entry name" value="SRA STEM-LOOP INTERACTING RNA BINDING PROTEIN"/>
    <property type="match status" value="1"/>
</dbReference>
<dbReference type="Pfam" id="PF00076">
    <property type="entry name" value="RRM_1"/>
    <property type="match status" value="1"/>
</dbReference>
<dbReference type="SMART" id="SM00360">
    <property type="entry name" value="RRM"/>
    <property type="match status" value="1"/>
</dbReference>
<dbReference type="SUPFAM" id="SSF54928">
    <property type="entry name" value="RNA-binding domain, RBD"/>
    <property type="match status" value="1"/>
</dbReference>
<dbReference type="PROSITE" id="PS50102">
    <property type="entry name" value="RRM"/>
    <property type="match status" value="1"/>
</dbReference>
<proteinExistence type="inferred from homology"/>
<evidence type="ECO:0000250" key="1"/>
<evidence type="ECO:0000250" key="2">
    <source>
        <dbReference type="UniProtKB" id="Q9D8T7"/>
    </source>
</evidence>
<evidence type="ECO:0000255" key="3"/>
<evidence type="ECO:0000255" key="4">
    <source>
        <dbReference type="PROSITE-ProRule" id="PRU00176"/>
    </source>
</evidence>
<evidence type="ECO:0000256" key="5">
    <source>
        <dbReference type="SAM" id="MobiDB-lite"/>
    </source>
</evidence>
<sequence length="111" mass="12493">MAASAARGAMALRTNIGRPVAFVRKIPWTAASSELREHFAQFGHVRKCTVPFDKETGFHKGMGWIHFSSEEELHNALQQENHVIDGVKLHVQPQRPKALQGDQTSDEEKDF</sequence>
<protein>
    <recommendedName>
        <fullName>SRA stem-loop-interacting RNA-binding protein, mitochondrial</fullName>
    </recommendedName>
</protein>
<organism>
    <name type="scientific">Bos taurus</name>
    <name type="common">Bovine</name>
    <dbReference type="NCBI Taxonomy" id="9913"/>
    <lineage>
        <taxon>Eukaryota</taxon>
        <taxon>Metazoa</taxon>
        <taxon>Chordata</taxon>
        <taxon>Craniata</taxon>
        <taxon>Vertebrata</taxon>
        <taxon>Euteleostomi</taxon>
        <taxon>Mammalia</taxon>
        <taxon>Eutheria</taxon>
        <taxon>Laurasiatheria</taxon>
        <taxon>Artiodactyla</taxon>
        <taxon>Ruminantia</taxon>
        <taxon>Pecora</taxon>
        <taxon>Bovidae</taxon>
        <taxon>Bovinae</taxon>
        <taxon>Bos</taxon>
    </lineage>
</organism>
<keyword id="KW-0496">Mitochondrion</keyword>
<keyword id="KW-0539">Nucleus</keyword>
<keyword id="KW-0597">Phosphoprotein</keyword>
<keyword id="KW-1185">Reference proteome</keyword>
<keyword id="KW-0678">Repressor</keyword>
<keyword id="KW-0694">RNA-binding</keyword>
<keyword id="KW-0804">Transcription</keyword>
<keyword id="KW-0805">Transcription regulation</keyword>
<keyword id="KW-0809">Transit peptide</keyword>
<comment type="function">
    <text evidence="1">RNA-binding protein that acts as a nuclear receptor corepressor. Probably acts by binding the SRA RNA, and repressing the SRA-mediated nuclear receptor coactivation. Binds the STR7 loop of SRA RNA. Also able to repress glucocorticoid (GR), androgen (AR), thyroid (TR) and VDR-mediated transactivation (By similarity).</text>
</comment>
<comment type="subcellular location">
    <subcellularLocation>
        <location evidence="1">Mitochondrion</location>
    </subcellularLocation>
    <subcellularLocation>
        <location evidence="1">Nucleus</location>
    </subcellularLocation>
    <text evidence="1">Predominantly mitochondrial. Some fraction is nuclear. In the nucleus, it is recruited to nuclear receptor target promoters (By similarity).</text>
</comment>
<gene>
    <name type="primary">SLIRP</name>
</gene>
<name>SLIRP_BOVIN</name>